<dbReference type="EC" id="3.1.2.22" evidence="4"/>
<dbReference type="EC" id="3.1.1.93" evidence="2"/>
<dbReference type="EMBL" id="AK052670">
    <property type="protein sequence ID" value="BAC35091.1"/>
    <property type="molecule type" value="mRNA"/>
</dbReference>
<dbReference type="EMBL" id="AK084998">
    <property type="protein sequence ID" value="BAC39335.1"/>
    <property type="molecule type" value="mRNA"/>
</dbReference>
<dbReference type="EMBL" id="AK166025">
    <property type="protein sequence ID" value="BAE38528.1"/>
    <property type="molecule type" value="mRNA"/>
</dbReference>
<dbReference type="EMBL" id="BC027656">
    <property type="protein sequence ID" value="AAH27656.1"/>
    <property type="molecule type" value="mRNA"/>
</dbReference>
<dbReference type="EMBL" id="BC058347">
    <property type="protein sequence ID" value="AAH58347.1"/>
    <property type="molecule type" value="mRNA"/>
</dbReference>
<dbReference type="CCDS" id="CCDS28201.1">
    <molecule id="Q6PE15-1"/>
</dbReference>
<dbReference type="RefSeq" id="NP_001258999.1">
    <molecule id="Q6PE15-2"/>
    <property type="nucleotide sequence ID" value="NM_001272070.1"/>
</dbReference>
<dbReference type="RefSeq" id="NP_766099.3">
    <molecule id="Q6PE15-1"/>
    <property type="nucleotide sequence ID" value="NM_172511.4"/>
</dbReference>
<dbReference type="PDB" id="6NY9">
    <property type="method" value="X-ray"/>
    <property type="resolution" value="1.66 A"/>
    <property type="chains" value="B=44-293"/>
</dbReference>
<dbReference type="PDBsum" id="6NY9"/>
<dbReference type="SMR" id="Q6PE15"/>
<dbReference type="BioGRID" id="229387">
    <property type="interactions" value="9"/>
</dbReference>
<dbReference type="FunCoup" id="Q6PE15">
    <property type="interactions" value="1594"/>
</dbReference>
<dbReference type="IntAct" id="Q6PE15">
    <property type="interactions" value="1"/>
</dbReference>
<dbReference type="MINT" id="Q6PE15"/>
<dbReference type="STRING" id="10090.ENSMUSP00000065282"/>
<dbReference type="ChEMBL" id="CHEMBL2146294"/>
<dbReference type="ESTHER" id="mouse-abhda">
    <property type="family name" value="ABHD10"/>
</dbReference>
<dbReference type="MEROPS" id="S09.023"/>
<dbReference type="iPTMnet" id="Q6PE15"/>
<dbReference type="PhosphoSitePlus" id="Q6PE15"/>
<dbReference type="SwissPalm" id="Q6PE15"/>
<dbReference type="PaxDb" id="10090-ENSMUSP00000065282"/>
<dbReference type="PeptideAtlas" id="Q6PE15"/>
<dbReference type="ProteomicsDB" id="286055">
    <molecule id="Q6PE15-1"/>
</dbReference>
<dbReference type="ProteomicsDB" id="286056">
    <molecule id="Q6PE15-2"/>
</dbReference>
<dbReference type="Pumba" id="Q6PE15"/>
<dbReference type="Antibodypedia" id="32454">
    <property type="antibodies" value="74 antibodies from 20 providers"/>
</dbReference>
<dbReference type="DNASU" id="213012"/>
<dbReference type="Ensembl" id="ENSMUST00000066983.13">
    <molecule id="Q6PE15-1"/>
    <property type="protein sequence ID" value="ENSMUSP00000065282.7"/>
    <property type="gene ID" value="ENSMUSG00000033157.18"/>
</dbReference>
<dbReference type="GeneID" id="213012"/>
<dbReference type="KEGG" id="mmu:213012"/>
<dbReference type="UCSC" id="uc007zix.3">
    <molecule id="Q6PE15-2"/>
    <property type="organism name" value="mouse"/>
</dbReference>
<dbReference type="UCSC" id="uc007ziy.3">
    <molecule id="Q6PE15-1"/>
    <property type="organism name" value="mouse"/>
</dbReference>
<dbReference type="AGR" id="MGI:2442422"/>
<dbReference type="CTD" id="55347"/>
<dbReference type="MGI" id="MGI:2442422">
    <property type="gene designation" value="Abhd10"/>
</dbReference>
<dbReference type="VEuPathDB" id="HostDB:ENSMUSG00000033157"/>
<dbReference type="eggNOG" id="ENOG502QT21">
    <property type="taxonomic scope" value="Eukaryota"/>
</dbReference>
<dbReference type="GeneTree" id="ENSGT00390000017765"/>
<dbReference type="HOGENOM" id="CLU_066961_0_0_1"/>
<dbReference type="InParanoid" id="Q6PE15"/>
<dbReference type="OMA" id="TISRWLE"/>
<dbReference type="OrthoDB" id="408373at2759"/>
<dbReference type="PhylomeDB" id="Q6PE15"/>
<dbReference type="TreeFam" id="TF329757"/>
<dbReference type="Reactome" id="R-MMU-156588">
    <property type="pathway name" value="Glucuronidation"/>
</dbReference>
<dbReference type="BioGRID-ORCS" id="213012">
    <property type="hits" value="3 hits in 76 CRISPR screens"/>
</dbReference>
<dbReference type="ChiTaRS" id="Abhd10">
    <property type="organism name" value="mouse"/>
</dbReference>
<dbReference type="PRO" id="PR:Q6PE15"/>
<dbReference type="Proteomes" id="UP000000589">
    <property type="component" value="Chromosome 16"/>
</dbReference>
<dbReference type="RNAct" id="Q6PE15">
    <property type="molecule type" value="protein"/>
</dbReference>
<dbReference type="Bgee" id="ENSMUSG00000033157">
    <property type="expression patterns" value="Expressed in granulocyte and 232 other cell types or tissues"/>
</dbReference>
<dbReference type="ExpressionAtlas" id="Q6PE15">
    <property type="expression patterns" value="baseline and differential"/>
</dbReference>
<dbReference type="GO" id="GO:0005829">
    <property type="term" value="C:cytosol"/>
    <property type="evidence" value="ECO:0007669"/>
    <property type="project" value="Ensembl"/>
</dbReference>
<dbReference type="GO" id="GO:0005739">
    <property type="term" value="C:mitochondrion"/>
    <property type="evidence" value="ECO:0007005"/>
    <property type="project" value="MGI"/>
</dbReference>
<dbReference type="GO" id="GO:0004553">
    <property type="term" value="F:hydrolase activity, hydrolyzing O-glycosyl compounds"/>
    <property type="evidence" value="ECO:0007669"/>
    <property type="project" value="Ensembl"/>
</dbReference>
<dbReference type="GO" id="GO:0102390">
    <property type="term" value="F:mycophenolic acid acyl-glucuronide esterase activity"/>
    <property type="evidence" value="ECO:0007669"/>
    <property type="project" value="UniProtKB-EC"/>
</dbReference>
<dbReference type="GO" id="GO:0008474">
    <property type="term" value="F:palmitoyl-(protein) hydrolase activity"/>
    <property type="evidence" value="ECO:0000314"/>
    <property type="project" value="UniProtKB"/>
</dbReference>
<dbReference type="GO" id="GO:0002084">
    <property type="term" value="P:protein depalmitoylation"/>
    <property type="evidence" value="ECO:0000314"/>
    <property type="project" value="UniProtKB"/>
</dbReference>
<dbReference type="GO" id="GO:0006805">
    <property type="term" value="P:xenobiotic metabolic process"/>
    <property type="evidence" value="ECO:0007669"/>
    <property type="project" value="Ensembl"/>
</dbReference>
<dbReference type="FunFam" id="3.40.50.1820:FF:000164">
    <property type="entry name" value="Mycophenolic acid acyl-glucuronide esterase, mitochondrial"/>
    <property type="match status" value="1"/>
</dbReference>
<dbReference type="Gene3D" id="3.40.50.1820">
    <property type="entry name" value="alpha/beta hydrolase"/>
    <property type="match status" value="1"/>
</dbReference>
<dbReference type="InterPro" id="IPR000073">
    <property type="entry name" value="AB_hydrolase_1"/>
</dbReference>
<dbReference type="InterPro" id="IPR029058">
    <property type="entry name" value="AB_hydrolase_fold"/>
</dbReference>
<dbReference type="InterPro" id="IPR052382">
    <property type="entry name" value="ABHD10_acyl-thioesterase"/>
</dbReference>
<dbReference type="PANTHER" id="PTHR16138">
    <property type="entry name" value="MYCOPHENOLIC ACID ACYL-GLUCURONIDE ESTERASE, MITOCHONDRIAL"/>
    <property type="match status" value="1"/>
</dbReference>
<dbReference type="PANTHER" id="PTHR16138:SF7">
    <property type="entry name" value="PALMITOYL-PROTEIN THIOESTERASE ABHD10, MITOCHONDRIAL"/>
    <property type="match status" value="1"/>
</dbReference>
<dbReference type="Pfam" id="PF00561">
    <property type="entry name" value="Abhydrolase_1"/>
    <property type="match status" value="1"/>
</dbReference>
<dbReference type="SUPFAM" id="SSF53474">
    <property type="entry name" value="alpha/beta-Hydrolases"/>
    <property type="match status" value="1"/>
</dbReference>
<accession>Q6PE15</accession>
<accession>Q3TMB4</accession>
<accession>Q8C3S8</accession>
<accession>Q8C724</accession>
<accession>Q8K188</accession>
<keyword id="KW-0002">3D-structure</keyword>
<keyword id="KW-0025">Alternative splicing</keyword>
<keyword id="KW-0378">Hydrolase</keyword>
<keyword id="KW-0496">Mitochondrion</keyword>
<keyword id="KW-1185">Reference proteome</keyword>
<keyword id="KW-0809">Transit peptide</keyword>
<evidence type="ECO:0000250" key="1">
    <source>
        <dbReference type="UniProtKB" id="Q8N2K0"/>
    </source>
</evidence>
<evidence type="ECO:0000250" key="2">
    <source>
        <dbReference type="UniProtKB" id="Q9NUJ1"/>
    </source>
</evidence>
<evidence type="ECO:0000255" key="3"/>
<evidence type="ECO:0000269" key="4">
    <source>
    </source>
</evidence>
<evidence type="ECO:0000303" key="5">
    <source>
    </source>
</evidence>
<evidence type="ECO:0000303" key="6">
    <source>
    </source>
</evidence>
<evidence type="ECO:0000305" key="7"/>
<evidence type="ECO:0000305" key="8">
    <source>
    </source>
</evidence>
<evidence type="ECO:0000312" key="9">
    <source>
        <dbReference type="MGI" id="MGI:2442422"/>
    </source>
</evidence>
<evidence type="ECO:0007744" key="10">
    <source>
        <dbReference type="PDB" id="6NY9"/>
    </source>
</evidence>
<evidence type="ECO:0007829" key="11">
    <source>
        <dbReference type="PDB" id="6NY9"/>
    </source>
</evidence>
<proteinExistence type="evidence at protein level"/>
<reference key="1">
    <citation type="journal article" date="2005" name="Science">
        <title>The transcriptional landscape of the mammalian genome.</title>
        <authorList>
            <person name="Carninci P."/>
            <person name="Kasukawa T."/>
            <person name="Katayama S."/>
            <person name="Gough J."/>
            <person name="Frith M.C."/>
            <person name="Maeda N."/>
            <person name="Oyama R."/>
            <person name="Ravasi T."/>
            <person name="Lenhard B."/>
            <person name="Wells C."/>
            <person name="Kodzius R."/>
            <person name="Shimokawa K."/>
            <person name="Bajic V.B."/>
            <person name="Brenner S.E."/>
            <person name="Batalov S."/>
            <person name="Forrest A.R."/>
            <person name="Zavolan M."/>
            <person name="Davis M.J."/>
            <person name="Wilming L.G."/>
            <person name="Aidinis V."/>
            <person name="Allen J.E."/>
            <person name="Ambesi-Impiombato A."/>
            <person name="Apweiler R."/>
            <person name="Aturaliya R.N."/>
            <person name="Bailey T.L."/>
            <person name="Bansal M."/>
            <person name="Baxter L."/>
            <person name="Beisel K.W."/>
            <person name="Bersano T."/>
            <person name="Bono H."/>
            <person name="Chalk A.M."/>
            <person name="Chiu K.P."/>
            <person name="Choudhary V."/>
            <person name="Christoffels A."/>
            <person name="Clutterbuck D.R."/>
            <person name="Crowe M.L."/>
            <person name="Dalla E."/>
            <person name="Dalrymple B.P."/>
            <person name="de Bono B."/>
            <person name="Della Gatta G."/>
            <person name="di Bernardo D."/>
            <person name="Down T."/>
            <person name="Engstrom P."/>
            <person name="Fagiolini M."/>
            <person name="Faulkner G."/>
            <person name="Fletcher C.F."/>
            <person name="Fukushima T."/>
            <person name="Furuno M."/>
            <person name="Futaki S."/>
            <person name="Gariboldi M."/>
            <person name="Georgii-Hemming P."/>
            <person name="Gingeras T.R."/>
            <person name="Gojobori T."/>
            <person name="Green R.E."/>
            <person name="Gustincich S."/>
            <person name="Harbers M."/>
            <person name="Hayashi Y."/>
            <person name="Hensch T.K."/>
            <person name="Hirokawa N."/>
            <person name="Hill D."/>
            <person name="Huminiecki L."/>
            <person name="Iacono M."/>
            <person name="Ikeo K."/>
            <person name="Iwama A."/>
            <person name="Ishikawa T."/>
            <person name="Jakt M."/>
            <person name="Kanapin A."/>
            <person name="Katoh M."/>
            <person name="Kawasawa Y."/>
            <person name="Kelso J."/>
            <person name="Kitamura H."/>
            <person name="Kitano H."/>
            <person name="Kollias G."/>
            <person name="Krishnan S.P."/>
            <person name="Kruger A."/>
            <person name="Kummerfeld S.K."/>
            <person name="Kurochkin I.V."/>
            <person name="Lareau L.F."/>
            <person name="Lazarevic D."/>
            <person name="Lipovich L."/>
            <person name="Liu J."/>
            <person name="Liuni S."/>
            <person name="McWilliam S."/>
            <person name="Madan Babu M."/>
            <person name="Madera M."/>
            <person name="Marchionni L."/>
            <person name="Matsuda H."/>
            <person name="Matsuzawa S."/>
            <person name="Miki H."/>
            <person name="Mignone F."/>
            <person name="Miyake S."/>
            <person name="Morris K."/>
            <person name="Mottagui-Tabar S."/>
            <person name="Mulder N."/>
            <person name="Nakano N."/>
            <person name="Nakauchi H."/>
            <person name="Ng P."/>
            <person name="Nilsson R."/>
            <person name="Nishiguchi S."/>
            <person name="Nishikawa S."/>
            <person name="Nori F."/>
            <person name="Ohara O."/>
            <person name="Okazaki Y."/>
            <person name="Orlando V."/>
            <person name="Pang K.C."/>
            <person name="Pavan W.J."/>
            <person name="Pavesi G."/>
            <person name="Pesole G."/>
            <person name="Petrovsky N."/>
            <person name="Piazza S."/>
            <person name="Reed J."/>
            <person name="Reid J.F."/>
            <person name="Ring B.Z."/>
            <person name="Ringwald M."/>
            <person name="Rost B."/>
            <person name="Ruan Y."/>
            <person name="Salzberg S.L."/>
            <person name="Sandelin A."/>
            <person name="Schneider C."/>
            <person name="Schoenbach C."/>
            <person name="Sekiguchi K."/>
            <person name="Semple C.A."/>
            <person name="Seno S."/>
            <person name="Sessa L."/>
            <person name="Sheng Y."/>
            <person name="Shibata Y."/>
            <person name="Shimada H."/>
            <person name="Shimada K."/>
            <person name="Silva D."/>
            <person name="Sinclair B."/>
            <person name="Sperling S."/>
            <person name="Stupka E."/>
            <person name="Sugiura K."/>
            <person name="Sultana R."/>
            <person name="Takenaka Y."/>
            <person name="Taki K."/>
            <person name="Tammoja K."/>
            <person name="Tan S.L."/>
            <person name="Tang S."/>
            <person name="Taylor M.S."/>
            <person name="Tegner J."/>
            <person name="Teichmann S.A."/>
            <person name="Ueda H.R."/>
            <person name="van Nimwegen E."/>
            <person name="Verardo R."/>
            <person name="Wei C.L."/>
            <person name="Yagi K."/>
            <person name="Yamanishi H."/>
            <person name="Zabarovsky E."/>
            <person name="Zhu S."/>
            <person name="Zimmer A."/>
            <person name="Hide W."/>
            <person name="Bult C."/>
            <person name="Grimmond S.M."/>
            <person name="Teasdale R.D."/>
            <person name="Liu E.T."/>
            <person name="Brusic V."/>
            <person name="Quackenbush J."/>
            <person name="Wahlestedt C."/>
            <person name="Mattick J.S."/>
            <person name="Hume D.A."/>
            <person name="Kai C."/>
            <person name="Sasaki D."/>
            <person name="Tomaru Y."/>
            <person name="Fukuda S."/>
            <person name="Kanamori-Katayama M."/>
            <person name="Suzuki M."/>
            <person name="Aoki J."/>
            <person name="Arakawa T."/>
            <person name="Iida J."/>
            <person name="Imamura K."/>
            <person name="Itoh M."/>
            <person name="Kato T."/>
            <person name="Kawaji H."/>
            <person name="Kawagashira N."/>
            <person name="Kawashima T."/>
            <person name="Kojima M."/>
            <person name="Kondo S."/>
            <person name="Konno H."/>
            <person name="Nakano K."/>
            <person name="Ninomiya N."/>
            <person name="Nishio T."/>
            <person name="Okada M."/>
            <person name="Plessy C."/>
            <person name="Shibata K."/>
            <person name="Shiraki T."/>
            <person name="Suzuki S."/>
            <person name="Tagami M."/>
            <person name="Waki K."/>
            <person name="Watahiki A."/>
            <person name="Okamura-Oho Y."/>
            <person name="Suzuki H."/>
            <person name="Kawai J."/>
            <person name="Hayashizaki Y."/>
        </authorList>
    </citation>
    <scope>NUCLEOTIDE SEQUENCE [LARGE SCALE MRNA] (ISOFORMS 1 AND 2)</scope>
    <source>
        <strain>C57BL/6J</strain>
        <tissue>Kidney</tissue>
        <tissue>Lung</tissue>
    </source>
</reference>
<reference key="2">
    <citation type="journal article" date="2004" name="Genome Res.">
        <title>The status, quality, and expansion of the NIH full-length cDNA project: the Mammalian Gene Collection (MGC).</title>
        <authorList>
            <consortium name="The MGC Project Team"/>
        </authorList>
    </citation>
    <scope>NUCLEOTIDE SEQUENCE [LARGE SCALE MRNA] (ISOFORM 1)</scope>
    <source>
        <strain>C57BL/6J</strain>
        <tissue>Brain</tissue>
        <tissue>Thymus</tissue>
    </source>
</reference>
<reference key="3">
    <citation type="journal article" date="2010" name="Cell">
        <title>A tissue-specific atlas of mouse protein phosphorylation and expression.</title>
        <authorList>
            <person name="Huttlin E.L."/>
            <person name="Jedrychowski M.P."/>
            <person name="Elias J.E."/>
            <person name="Goswami T."/>
            <person name="Rad R."/>
            <person name="Beausoleil S.A."/>
            <person name="Villen J."/>
            <person name="Haas W."/>
            <person name="Sowa M.E."/>
            <person name="Gygi S.P."/>
        </authorList>
    </citation>
    <scope>IDENTIFICATION BY MASS SPECTROMETRY [LARGE SCALE ANALYSIS]</scope>
    <source>
        <tissue>Brain</tissue>
        <tissue>Brown adipose tissue</tissue>
        <tissue>Heart</tissue>
        <tissue>Kidney</tissue>
        <tissue>Lung</tissue>
        <tissue>Pancreas</tissue>
        <tissue>Spleen</tissue>
        <tissue>Testis</tissue>
    </source>
</reference>
<reference evidence="10" key="4">
    <citation type="journal article" date="2019" name="Nat. Chem. Biol.">
        <title>ABHD10 is an S-depalmitoylase affecting redox homeostasis through peroxiredoxin-5.</title>
        <authorList>
            <person name="Cao Y."/>
            <person name="Qiu T."/>
            <person name="Kathayat R.S."/>
            <person name="Azizi S.A."/>
            <person name="Thorne A.K."/>
            <person name="Ahn D."/>
            <person name="Fukata Y."/>
            <person name="Fukata M."/>
            <person name="Rice P.A."/>
            <person name="Dickinson B.C."/>
        </authorList>
    </citation>
    <scope>X-RAY CRYSTALLOGRAPHY (1.66 ANGSTROMS) OF 44-293</scope>
    <scope>FUNCTION</scope>
    <scope>CATALYTIC ACTIVITY</scope>
</reference>
<comment type="function">
    <text evidence="2 4">Acts as an acyl-protein thioesterase that hydrolyzes fatty acids from acylated residues in proteins (PubMed:31740833). Regulates the mitochondrial S-depalmitoylation of the nucleophilic active site residue of peroxiredoxin-5/PRDX5, a key antioxidant protein, therefore modulating mitochondrial antioxidant ability (PubMed:31740833). Also catalyzes the deglucuronidation of mycophenolic acid acyl-glucuronide, an active metabolite of the immunosuppressant drug mycophenolate (By similarity).</text>
</comment>
<comment type="catalytic activity">
    <reaction evidence="4">
        <text>S-hexadecanoyl-L-cysteinyl-[protein] + H2O = L-cysteinyl-[protein] + hexadecanoate + H(+)</text>
        <dbReference type="Rhea" id="RHEA:19233"/>
        <dbReference type="Rhea" id="RHEA-COMP:10131"/>
        <dbReference type="Rhea" id="RHEA-COMP:11032"/>
        <dbReference type="ChEBI" id="CHEBI:7896"/>
        <dbReference type="ChEBI" id="CHEBI:15377"/>
        <dbReference type="ChEBI" id="CHEBI:15378"/>
        <dbReference type="ChEBI" id="CHEBI:29950"/>
        <dbReference type="ChEBI" id="CHEBI:74151"/>
        <dbReference type="EC" id="3.1.2.22"/>
    </reaction>
    <physiologicalReaction direction="left-to-right" evidence="8">
        <dbReference type="Rhea" id="RHEA:19234"/>
    </physiologicalReaction>
</comment>
<comment type="catalytic activity">
    <reaction evidence="2">
        <text>mycophenolic acid O-acyl-beta-D-glucuronide + H2O = mycophenolate + D-glucuronate + H(+)</text>
        <dbReference type="Rhea" id="RHEA:34179"/>
        <dbReference type="ChEBI" id="CHEBI:15377"/>
        <dbReference type="ChEBI" id="CHEBI:15378"/>
        <dbReference type="ChEBI" id="CHEBI:58720"/>
        <dbReference type="ChEBI" id="CHEBI:62932"/>
        <dbReference type="ChEBI" id="CHEBI:66982"/>
        <dbReference type="EC" id="3.1.1.93"/>
    </reaction>
    <physiologicalReaction direction="left-to-right" evidence="2">
        <dbReference type="Rhea" id="RHEA:34180"/>
    </physiologicalReaction>
</comment>
<comment type="activity regulation">
    <text evidence="2">Inhibited by palmostatin-B.</text>
</comment>
<comment type="subcellular location">
    <subcellularLocation>
        <location evidence="2">Mitochondrion</location>
    </subcellularLocation>
</comment>
<comment type="alternative products">
    <event type="alternative splicing"/>
    <isoform>
        <id>Q6PE15-1</id>
        <name>1</name>
        <sequence type="displayed"/>
    </isoform>
    <isoform>
        <id>Q6PE15-2</id>
        <name>2</name>
        <sequence type="described" ref="VSP_023893 VSP_023894"/>
    </isoform>
</comment>
<comment type="similarity">
    <text evidence="7">Belongs to the AB hydrolase superfamily.</text>
</comment>
<name>ABHDA_MOUSE</name>
<gene>
    <name evidence="9" type="primary">Abhd10</name>
</gene>
<organism>
    <name type="scientific">Mus musculus</name>
    <name type="common">Mouse</name>
    <dbReference type="NCBI Taxonomy" id="10090"/>
    <lineage>
        <taxon>Eukaryota</taxon>
        <taxon>Metazoa</taxon>
        <taxon>Chordata</taxon>
        <taxon>Craniata</taxon>
        <taxon>Vertebrata</taxon>
        <taxon>Euteleostomi</taxon>
        <taxon>Mammalia</taxon>
        <taxon>Eutheria</taxon>
        <taxon>Euarchontoglires</taxon>
        <taxon>Glires</taxon>
        <taxon>Rodentia</taxon>
        <taxon>Myomorpha</taxon>
        <taxon>Muroidea</taxon>
        <taxon>Muridae</taxon>
        <taxon>Murinae</taxon>
        <taxon>Mus</taxon>
        <taxon>Mus</taxon>
    </lineage>
</organism>
<feature type="transit peptide" description="Mitochondrion" evidence="3">
    <location>
        <begin position="1"/>
        <end position="43"/>
    </location>
</feature>
<feature type="chain" id="PRO_0000280734" description="Palmitoyl-protein thioesterase ABHD10, mitochondrial">
    <location>
        <begin position="44"/>
        <end position="297"/>
    </location>
</feature>
<feature type="domain" description="AB hydrolase-1" evidence="3">
    <location>
        <begin position="69"/>
        <end position="196"/>
    </location>
</feature>
<feature type="active site" description="Charge relay system" evidence="2">
    <location>
        <position position="143"/>
    </location>
</feature>
<feature type="active site" description="Charge relay system" evidence="1">
    <location>
        <position position="240"/>
    </location>
</feature>
<feature type="active site" description="Charge relay system" evidence="1">
    <location>
        <position position="270"/>
    </location>
</feature>
<feature type="splice variant" id="VSP_023893" description="In isoform 2." evidence="5">
    <original>D</original>
    <variation>AQSVDICGAATPSEWSSKPLGTDS</variation>
    <location>
        <position position="269"/>
    </location>
</feature>
<feature type="splice variant" id="VSP_023894" description="In isoform 2." evidence="5">
    <location>
        <begin position="270"/>
        <end position="297"/>
    </location>
</feature>
<feature type="sequence conflict" description="In Ref. 1; BAC35091." evidence="7" ref="1">
    <original>Q</original>
    <variation>R</variation>
    <location>
        <position position="267"/>
    </location>
</feature>
<feature type="strand" evidence="11">
    <location>
        <begin position="46"/>
        <end position="49"/>
    </location>
</feature>
<feature type="strand" evidence="11">
    <location>
        <begin position="52"/>
        <end position="54"/>
    </location>
</feature>
<feature type="strand" evidence="11">
    <location>
        <begin position="57"/>
        <end position="62"/>
    </location>
</feature>
<feature type="strand" evidence="11">
    <location>
        <begin position="65"/>
        <end position="72"/>
    </location>
</feature>
<feature type="helix" evidence="11">
    <location>
        <begin position="82"/>
        <end position="94"/>
    </location>
</feature>
<feature type="strand" evidence="11">
    <location>
        <begin position="96"/>
        <end position="101"/>
    </location>
</feature>
<feature type="helix" evidence="11">
    <location>
        <begin position="113"/>
        <end position="115"/>
    </location>
</feature>
<feature type="helix" evidence="11">
    <location>
        <begin position="118"/>
        <end position="131"/>
    </location>
</feature>
<feature type="strand" evidence="11">
    <location>
        <begin position="137"/>
        <end position="142"/>
    </location>
</feature>
<feature type="helix" evidence="11">
    <location>
        <begin position="144"/>
        <end position="155"/>
    </location>
</feature>
<feature type="turn" evidence="11">
    <location>
        <begin position="157"/>
        <end position="159"/>
    </location>
</feature>
<feature type="strand" evidence="11">
    <location>
        <begin position="160"/>
        <end position="167"/>
    </location>
</feature>
<feature type="turn" evidence="11">
    <location>
        <begin position="170"/>
        <end position="173"/>
    </location>
</feature>
<feature type="helix" evidence="11">
    <location>
        <begin position="174"/>
        <end position="179"/>
    </location>
</feature>
<feature type="helix" evidence="11">
    <location>
        <begin position="182"/>
        <end position="191"/>
    </location>
</feature>
<feature type="strand" evidence="11">
    <location>
        <begin position="193"/>
        <end position="195"/>
    </location>
</feature>
<feature type="helix" evidence="11">
    <location>
        <begin position="198"/>
        <end position="201"/>
    </location>
</feature>
<feature type="turn" evidence="11">
    <location>
        <begin position="202"/>
        <end position="204"/>
    </location>
</feature>
<feature type="strand" evidence="11">
    <location>
        <begin position="207"/>
        <end position="209"/>
    </location>
</feature>
<feature type="helix" evidence="11">
    <location>
        <begin position="210"/>
        <end position="216"/>
    </location>
</feature>
<feature type="helix" evidence="11">
    <location>
        <begin position="217"/>
        <end position="219"/>
    </location>
</feature>
<feature type="strand" evidence="11">
    <location>
        <begin position="232"/>
        <end position="237"/>
    </location>
</feature>
<feature type="strand" evidence="11">
    <location>
        <begin position="241"/>
        <end position="243"/>
    </location>
</feature>
<feature type="helix" evidence="11">
    <location>
        <begin position="246"/>
        <end position="254"/>
    </location>
</feature>
<feature type="strand" evidence="11">
    <location>
        <begin position="260"/>
        <end position="265"/>
    </location>
</feature>
<feature type="helix" evidence="11">
    <location>
        <begin position="275"/>
        <end position="292"/>
    </location>
</feature>
<sequence>MAAWAPCRRWGWAAVSFGRHPGLSASLARKPPRAWWLSACRQKASLSFLNRSELPNLAYKRLKGKTPGIIFIPGYLSNMNGIKAVAVEEFCKSLGHAFIRFDYSGIGSSDGNLAECTVGKWRKDVLSILDDVAEGPQILVGSSLGGWLMLHAAIARPEKVIALIGIATAADGLVTQYHALPVETQKEIEMKGEWTLPSRYNKEGYFRIPYSFIKEAEHHCLLHSPIPVTCPVRLLHGMKDEIVPWQRSLQVADRIVSPDVDVILRKQGDHRMKEKADIHLLICTIDDLIDKLSTVVP</sequence>
<protein>
    <recommendedName>
        <fullName evidence="6">Palmitoyl-protein thioesterase ABHD10, mitochondrial</fullName>
        <ecNumber evidence="4">3.1.2.22</ecNumber>
    </recommendedName>
    <alternativeName>
        <fullName evidence="6">Acyl-protein thioesterase ABHD10</fullName>
    </alternativeName>
    <alternativeName>
        <fullName evidence="2">Alpha/beta hydrolase domain-containing protein 10</fullName>
        <shortName evidence="2">Abhydrolase domain-containing protein 10</shortName>
    </alternativeName>
    <alternativeName>
        <fullName>Mycophenolic acid acyl-glucuronide esterase, mitochondrial</fullName>
        <ecNumber evidence="2">3.1.1.93</ecNumber>
    </alternativeName>
</protein>